<comment type="catalytic activity">
    <reaction evidence="1">
        <text>1-(5-phospho-beta-D-ribosyl)-5-[(5-phospho-beta-D-ribosylamino)methylideneamino]imidazole-4-carboxamide = 5-[(5-phospho-1-deoxy-D-ribulos-1-ylimino)methylamino]-1-(5-phospho-beta-D-ribosyl)imidazole-4-carboxamide</text>
        <dbReference type="Rhea" id="RHEA:15469"/>
        <dbReference type="ChEBI" id="CHEBI:58435"/>
        <dbReference type="ChEBI" id="CHEBI:58525"/>
        <dbReference type="EC" id="5.3.1.16"/>
    </reaction>
</comment>
<comment type="pathway">
    <text evidence="1">Amino-acid biosynthesis; L-histidine biosynthesis; L-histidine from 5-phospho-alpha-D-ribose 1-diphosphate: step 4/9.</text>
</comment>
<comment type="subcellular location">
    <subcellularLocation>
        <location evidence="1">Cytoplasm</location>
    </subcellularLocation>
</comment>
<comment type="similarity">
    <text evidence="1">Belongs to the HisA/HisF family.</text>
</comment>
<keyword id="KW-0028">Amino-acid biosynthesis</keyword>
<keyword id="KW-0963">Cytoplasm</keyword>
<keyword id="KW-0368">Histidine biosynthesis</keyword>
<keyword id="KW-0413">Isomerase</keyword>
<protein>
    <recommendedName>
        <fullName evidence="1">1-(5-phosphoribosyl)-5-[(5-phosphoribosylamino)methylideneamino] imidazole-4-carboxamide isomerase</fullName>
        <ecNumber evidence="1">5.3.1.16</ecNumber>
    </recommendedName>
    <alternativeName>
        <fullName evidence="1">Phosphoribosylformimino-5-aminoimidazole carboxamide ribotide isomerase</fullName>
    </alternativeName>
</protein>
<feature type="chain" id="PRO_0000229054" description="1-(5-phosphoribosyl)-5-[(5-phosphoribosylamino)methylideneamino] imidazole-4-carboxamide isomerase">
    <location>
        <begin position="1"/>
        <end position="237"/>
    </location>
</feature>
<feature type="active site" description="Proton acceptor" evidence="1">
    <location>
        <position position="8"/>
    </location>
</feature>
<feature type="active site" description="Proton donor" evidence="1">
    <location>
        <position position="129"/>
    </location>
</feature>
<reference key="1">
    <citation type="journal article" date="2005" name="Science">
        <title>Genome sequence of the PCE-dechlorinating bacterium Dehalococcoides ethenogenes.</title>
        <authorList>
            <person name="Seshadri R."/>
            <person name="Adrian L."/>
            <person name="Fouts D.E."/>
            <person name="Eisen J.A."/>
            <person name="Phillippy A.M."/>
            <person name="Methe B.A."/>
            <person name="Ward N.L."/>
            <person name="Nelson W.C."/>
            <person name="DeBoy R.T."/>
            <person name="Khouri H.M."/>
            <person name="Kolonay J.F."/>
            <person name="Dodson R.J."/>
            <person name="Daugherty S.C."/>
            <person name="Brinkac L.M."/>
            <person name="Sullivan S.A."/>
            <person name="Madupu R."/>
            <person name="Nelson K.E."/>
            <person name="Kang K.H."/>
            <person name="Impraim M."/>
            <person name="Tran K."/>
            <person name="Robinson J.M."/>
            <person name="Forberger H.A."/>
            <person name="Fraser C.M."/>
            <person name="Zinder S.H."/>
            <person name="Heidelberg J.F."/>
        </authorList>
    </citation>
    <scope>NUCLEOTIDE SEQUENCE [LARGE SCALE GENOMIC DNA]</scope>
    <source>
        <strain>ATCC BAA-2266 / KCTC 15142 / 195</strain>
    </source>
</reference>
<organism>
    <name type="scientific">Dehalococcoides mccartyi (strain ATCC BAA-2266 / KCTC 15142 / 195)</name>
    <name type="common">Dehalococcoides ethenogenes (strain 195)</name>
    <dbReference type="NCBI Taxonomy" id="243164"/>
    <lineage>
        <taxon>Bacteria</taxon>
        <taxon>Bacillati</taxon>
        <taxon>Chloroflexota</taxon>
        <taxon>Dehalococcoidia</taxon>
        <taxon>Dehalococcoidales</taxon>
        <taxon>Dehalococcoidaceae</taxon>
        <taxon>Dehalococcoides</taxon>
    </lineage>
</organism>
<dbReference type="EC" id="5.3.1.16" evidence="1"/>
<dbReference type="EMBL" id="CP000027">
    <property type="protein sequence ID" value="AAW39446.1"/>
    <property type="molecule type" value="Genomic_DNA"/>
</dbReference>
<dbReference type="SMR" id="Q3Z6V7"/>
<dbReference type="FunCoup" id="Q3Z6V7">
    <property type="interactions" value="256"/>
</dbReference>
<dbReference type="STRING" id="243164.DET1331"/>
<dbReference type="KEGG" id="det:DET1331"/>
<dbReference type="eggNOG" id="COG0106">
    <property type="taxonomic scope" value="Bacteria"/>
</dbReference>
<dbReference type="HOGENOM" id="CLU_048577_1_1_0"/>
<dbReference type="InParanoid" id="Q3Z6V7"/>
<dbReference type="UniPathway" id="UPA00031">
    <property type="reaction ID" value="UER00009"/>
</dbReference>
<dbReference type="Proteomes" id="UP000008289">
    <property type="component" value="Chromosome"/>
</dbReference>
<dbReference type="GO" id="GO:0005737">
    <property type="term" value="C:cytoplasm"/>
    <property type="evidence" value="ECO:0007669"/>
    <property type="project" value="UniProtKB-SubCell"/>
</dbReference>
<dbReference type="GO" id="GO:0003949">
    <property type="term" value="F:1-(5-phosphoribosyl)-5-[(5-phosphoribosylamino)methylideneamino]imidazole-4-carboxamide isomerase activity"/>
    <property type="evidence" value="ECO:0007669"/>
    <property type="project" value="UniProtKB-UniRule"/>
</dbReference>
<dbReference type="GO" id="GO:0000105">
    <property type="term" value="P:L-histidine biosynthetic process"/>
    <property type="evidence" value="ECO:0007669"/>
    <property type="project" value="UniProtKB-UniRule"/>
</dbReference>
<dbReference type="GO" id="GO:0000162">
    <property type="term" value="P:L-tryptophan biosynthetic process"/>
    <property type="evidence" value="ECO:0007669"/>
    <property type="project" value="TreeGrafter"/>
</dbReference>
<dbReference type="CDD" id="cd04732">
    <property type="entry name" value="HisA"/>
    <property type="match status" value="1"/>
</dbReference>
<dbReference type="FunFam" id="3.20.20.70:FF:000009">
    <property type="entry name" value="1-(5-phosphoribosyl)-5-[(5-phosphoribosylamino)methylideneamino] imidazole-4-carboxamide isomerase"/>
    <property type="match status" value="1"/>
</dbReference>
<dbReference type="Gene3D" id="3.20.20.70">
    <property type="entry name" value="Aldolase class I"/>
    <property type="match status" value="1"/>
</dbReference>
<dbReference type="HAMAP" id="MF_01014">
    <property type="entry name" value="HisA"/>
    <property type="match status" value="1"/>
</dbReference>
<dbReference type="InterPro" id="IPR013785">
    <property type="entry name" value="Aldolase_TIM"/>
</dbReference>
<dbReference type="InterPro" id="IPR006062">
    <property type="entry name" value="His_biosynth"/>
</dbReference>
<dbReference type="InterPro" id="IPR006063">
    <property type="entry name" value="HisA_bact_arch"/>
</dbReference>
<dbReference type="InterPro" id="IPR044524">
    <property type="entry name" value="Isoase_HisA-like"/>
</dbReference>
<dbReference type="InterPro" id="IPR023016">
    <property type="entry name" value="Isoase_HisA-like_bact"/>
</dbReference>
<dbReference type="InterPro" id="IPR011060">
    <property type="entry name" value="RibuloseP-bd_barrel"/>
</dbReference>
<dbReference type="NCBIfam" id="TIGR00007">
    <property type="entry name" value="1-(5-phosphoribosyl)-5-[(5-phosphoribosylamino)methylideneamino]imidazole-4-carboxamide isomerase"/>
    <property type="match status" value="1"/>
</dbReference>
<dbReference type="NCBIfam" id="NF010112">
    <property type="entry name" value="PRK13585.1"/>
    <property type="match status" value="1"/>
</dbReference>
<dbReference type="PANTHER" id="PTHR43090">
    <property type="entry name" value="1-(5-PHOSPHORIBOSYL)-5-[(5-PHOSPHORIBOSYLAMINO)METHYLIDENEAMINO] IMIDAZOLE-4-CARBOXAMIDE ISOMERASE"/>
    <property type="match status" value="1"/>
</dbReference>
<dbReference type="PANTHER" id="PTHR43090:SF2">
    <property type="entry name" value="1-(5-PHOSPHORIBOSYL)-5-[(5-PHOSPHORIBOSYLAMINO)METHYLIDENEAMINO] IMIDAZOLE-4-CARBOXAMIDE ISOMERASE"/>
    <property type="match status" value="1"/>
</dbReference>
<dbReference type="Pfam" id="PF00977">
    <property type="entry name" value="His_biosynth"/>
    <property type="match status" value="1"/>
</dbReference>
<dbReference type="SUPFAM" id="SSF51366">
    <property type="entry name" value="Ribulose-phoshate binding barrel"/>
    <property type="match status" value="1"/>
</dbReference>
<evidence type="ECO:0000255" key="1">
    <source>
        <dbReference type="HAMAP-Rule" id="MF_01014"/>
    </source>
</evidence>
<proteinExistence type="inferred from homology"/>
<gene>
    <name evidence="1" type="primary">hisA</name>
    <name type="ordered locus">DET1331</name>
</gene>
<sequence length="237" mass="25375">MEIIPAIDILGGRCVRLLQGDYAQETVYSPDPVGTAMRWQSLGAPRLHVVDLDGAADGESVNFELIREIANSALIPVEVGGGIRSMDTVKKLLTAGVDRVILGTVAVENPELVREICARYADSVAVSIDARNGKVATRGWVNSTEVDALELARSMKKLGVKRFIYTDISRDGTLSEPNFAAIRDLISAINMPVIASGGVSSLSHLRLLKDIGAEGAIVGKAIYTGDLNLKRAFEELS</sequence>
<accession>Q3Z6V7</accession>
<name>HIS4_DEHM1</name>